<keyword id="KW-1003">Cell membrane</keyword>
<keyword id="KW-0472">Membrane</keyword>
<keyword id="KW-0808">Transferase</keyword>
<keyword id="KW-0812">Transmembrane</keyword>
<keyword id="KW-1133">Transmembrane helix</keyword>
<comment type="function">
    <text evidence="1">Catalyzes the transfer of the diacylglyceryl group from phosphatidylglycerol to the sulfhydryl group of the N-terminal cysteine of a prolipoprotein, the first step in the formation of mature lipoproteins.</text>
</comment>
<comment type="catalytic activity">
    <reaction evidence="1">
        <text>L-cysteinyl-[prolipoprotein] + a 1,2-diacyl-sn-glycero-3-phospho-(1'-sn-glycerol) = an S-1,2-diacyl-sn-glyceryl-L-cysteinyl-[prolipoprotein] + sn-glycerol 1-phosphate + H(+)</text>
        <dbReference type="Rhea" id="RHEA:56712"/>
        <dbReference type="Rhea" id="RHEA-COMP:14679"/>
        <dbReference type="Rhea" id="RHEA-COMP:14680"/>
        <dbReference type="ChEBI" id="CHEBI:15378"/>
        <dbReference type="ChEBI" id="CHEBI:29950"/>
        <dbReference type="ChEBI" id="CHEBI:57685"/>
        <dbReference type="ChEBI" id="CHEBI:64716"/>
        <dbReference type="ChEBI" id="CHEBI:140658"/>
        <dbReference type="EC" id="2.5.1.145"/>
    </reaction>
</comment>
<comment type="pathway">
    <text evidence="1">Protein modification; lipoprotein biosynthesis (diacylglyceryl transfer).</text>
</comment>
<comment type="subcellular location">
    <subcellularLocation>
        <location evidence="1">Cell membrane</location>
        <topology evidence="1">Multi-pass membrane protein</topology>
    </subcellularLocation>
</comment>
<comment type="similarity">
    <text evidence="1">Belongs to the Lgt family.</text>
</comment>
<dbReference type="EC" id="2.5.1.145" evidence="1"/>
<dbReference type="EMBL" id="CP000817">
    <property type="protein sequence ID" value="ACA38062.1"/>
    <property type="molecule type" value="Genomic_DNA"/>
</dbReference>
<dbReference type="RefSeq" id="WP_012292219.1">
    <property type="nucleotide sequence ID" value="NC_010382.1"/>
</dbReference>
<dbReference type="SMR" id="B1HVP3"/>
<dbReference type="EnsemblBacteria" id="ACA38062">
    <property type="protein sequence ID" value="ACA38062"/>
    <property type="gene ID" value="Bsph_0435"/>
</dbReference>
<dbReference type="KEGG" id="lsp:Bsph_0435"/>
<dbReference type="HOGENOM" id="CLU_013386_1_2_9"/>
<dbReference type="UniPathway" id="UPA00664"/>
<dbReference type="Proteomes" id="UP000002164">
    <property type="component" value="Chromosome"/>
</dbReference>
<dbReference type="GO" id="GO:0005886">
    <property type="term" value="C:plasma membrane"/>
    <property type="evidence" value="ECO:0007669"/>
    <property type="project" value="UniProtKB-SubCell"/>
</dbReference>
<dbReference type="GO" id="GO:0008961">
    <property type="term" value="F:phosphatidylglycerol-prolipoprotein diacylglyceryl transferase activity"/>
    <property type="evidence" value="ECO:0007669"/>
    <property type="project" value="UniProtKB-UniRule"/>
</dbReference>
<dbReference type="GO" id="GO:0042158">
    <property type="term" value="P:lipoprotein biosynthetic process"/>
    <property type="evidence" value="ECO:0007669"/>
    <property type="project" value="UniProtKB-UniRule"/>
</dbReference>
<dbReference type="HAMAP" id="MF_01147">
    <property type="entry name" value="Lgt"/>
    <property type="match status" value="1"/>
</dbReference>
<dbReference type="InterPro" id="IPR001640">
    <property type="entry name" value="Lgt"/>
</dbReference>
<dbReference type="NCBIfam" id="TIGR00544">
    <property type="entry name" value="lgt"/>
    <property type="match status" value="1"/>
</dbReference>
<dbReference type="PANTHER" id="PTHR30589:SF0">
    <property type="entry name" value="PHOSPHATIDYLGLYCEROL--PROLIPOPROTEIN DIACYLGLYCERYL TRANSFERASE"/>
    <property type="match status" value="1"/>
</dbReference>
<dbReference type="PANTHER" id="PTHR30589">
    <property type="entry name" value="PROLIPOPROTEIN DIACYLGLYCERYL TRANSFERASE"/>
    <property type="match status" value="1"/>
</dbReference>
<dbReference type="Pfam" id="PF01790">
    <property type="entry name" value="LGT"/>
    <property type="match status" value="1"/>
</dbReference>
<dbReference type="PROSITE" id="PS01311">
    <property type="entry name" value="LGT"/>
    <property type="match status" value="1"/>
</dbReference>
<sequence>MDLLLLQINPIAFHLGPIPVRWYGLLIVSGIILAYVVGQREAVKRGLPEDFLADLLLWAVPISIICARIYYVSMRWDYYSENPGKIIEIWNGGIAIHGALIGAFVTAYIFTRIKNVSFLRVADIAAPSILIGQIIGRWGNFMNQEAYGGPVSKEFLENLMLPDWIINQMYIEELGTYVHPTFLYESVWNLIGLIILLILRKVNLNRGEIFFSYLIWYSIGRFYIEGMRTDSLYLVGDLRSAQIVSIIGIVVGLGAIIYRRIKVKPAMKYLDNK</sequence>
<protein>
    <recommendedName>
        <fullName evidence="1">Phosphatidylglycerol--prolipoprotein diacylglyceryl transferase</fullName>
        <ecNumber evidence="1">2.5.1.145</ecNumber>
    </recommendedName>
</protein>
<name>LGT_LYSSC</name>
<accession>B1HVP3</accession>
<reference key="1">
    <citation type="journal article" date="2008" name="J. Bacteriol.">
        <title>Complete genome sequence of the mosquitocidal bacterium Bacillus sphaericus C3-41 and comparison with those of closely related Bacillus species.</title>
        <authorList>
            <person name="Hu X."/>
            <person name="Fan W."/>
            <person name="Han B."/>
            <person name="Liu H."/>
            <person name="Zheng D."/>
            <person name="Li Q."/>
            <person name="Dong W."/>
            <person name="Yan J."/>
            <person name="Gao M."/>
            <person name="Berry C."/>
            <person name="Yuan Z."/>
        </authorList>
    </citation>
    <scope>NUCLEOTIDE SEQUENCE [LARGE SCALE GENOMIC DNA]</scope>
    <source>
        <strain>C3-41</strain>
    </source>
</reference>
<proteinExistence type="inferred from homology"/>
<organism>
    <name type="scientific">Lysinibacillus sphaericus (strain C3-41)</name>
    <dbReference type="NCBI Taxonomy" id="444177"/>
    <lineage>
        <taxon>Bacteria</taxon>
        <taxon>Bacillati</taxon>
        <taxon>Bacillota</taxon>
        <taxon>Bacilli</taxon>
        <taxon>Bacillales</taxon>
        <taxon>Bacillaceae</taxon>
        <taxon>Lysinibacillus</taxon>
    </lineage>
</organism>
<feature type="chain" id="PRO_1000137438" description="Phosphatidylglycerol--prolipoprotein diacylglyceryl transferase">
    <location>
        <begin position="1"/>
        <end position="273"/>
    </location>
</feature>
<feature type="transmembrane region" description="Helical" evidence="1">
    <location>
        <begin position="18"/>
        <end position="38"/>
    </location>
</feature>
<feature type="transmembrane region" description="Helical" evidence="1">
    <location>
        <begin position="47"/>
        <end position="67"/>
    </location>
</feature>
<feature type="transmembrane region" description="Helical" evidence="1">
    <location>
        <begin position="89"/>
        <end position="109"/>
    </location>
</feature>
<feature type="transmembrane region" description="Helical" evidence="1">
    <location>
        <begin position="116"/>
        <end position="136"/>
    </location>
</feature>
<feature type="transmembrane region" description="Helical" evidence="1">
    <location>
        <begin position="178"/>
        <end position="198"/>
    </location>
</feature>
<feature type="transmembrane region" description="Helical" evidence="1">
    <location>
        <begin position="207"/>
        <end position="227"/>
    </location>
</feature>
<feature type="transmembrane region" description="Helical" evidence="1">
    <location>
        <begin position="238"/>
        <end position="258"/>
    </location>
</feature>
<feature type="binding site" evidence="1">
    <location>
        <position position="137"/>
    </location>
    <ligand>
        <name>a 1,2-diacyl-sn-glycero-3-phospho-(1'-sn-glycerol)</name>
        <dbReference type="ChEBI" id="CHEBI:64716"/>
    </ligand>
</feature>
<evidence type="ECO:0000255" key="1">
    <source>
        <dbReference type="HAMAP-Rule" id="MF_01147"/>
    </source>
</evidence>
<gene>
    <name evidence="1" type="primary">lgt</name>
    <name type="ordered locus">Bsph_0435</name>
</gene>